<proteinExistence type="inferred from homology"/>
<protein>
    <recommendedName>
        <fullName evidence="2">Translation initiation factor IF-2</fullName>
    </recommendedName>
</protein>
<gene>
    <name evidence="2" type="primary">infB</name>
    <name type="ordered locus">PTH_1269</name>
</gene>
<reference key="1">
    <citation type="journal article" date="2008" name="Genome Res.">
        <title>The genome of Pelotomaculum thermopropionicum reveals niche-associated evolution in anaerobic microbiota.</title>
        <authorList>
            <person name="Kosaka T."/>
            <person name="Kato S."/>
            <person name="Shimoyama T."/>
            <person name="Ishii S."/>
            <person name="Abe T."/>
            <person name="Watanabe K."/>
        </authorList>
    </citation>
    <scope>NUCLEOTIDE SEQUENCE [LARGE SCALE GENOMIC DNA]</scope>
    <source>
        <strain>DSM 13744 / JCM 10971 / SI</strain>
    </source>
</reference>
<keyword id="KW-0963">Cytoplasm</keyword>
<keyword id="KW-0342">GTP-binding</keyword>
<keyword id="KW-0396">Initiation factor</keyword>
<keyword id="KW-0547">Nucleotide-binding</keyword>
<keyword id="KW-0648">Protein biosynthesis</keyword>
<keyword id="KW-1185">Reference proteome</keyword>
<feature type="chain" id="PRO_1000075611" description="Translation initiation factor IF-2">
    <location>
        <begin position="1"/>
        <end position="973"/>
    </location>
</feature>
<feature type="domain" description="tr-type G">
    <location>
        <begin position="472"/>
        <end position="641"/>
    </location>
</feature>
<feature type="region of interest" description="Disordered" evidence="3">
    <location>
        <begin position="52"/>
        <end position="388"/>
    </location>
</feature>
<feature type="region of interest" description="G1" evidence="1">
    <location>
        <begin position="481"/>
        <end position="488"/>
    </location>
</feature>
<feature type="region of interest" description="G2" evidence="1">
    <location>
        <begin position="506"/>
        <end position="510"/>
    </location>
</feature>
<feature type="region of interest" description="G3" evidence="1">
    <location>
        <begin position="527"/>
        <end position="530"/>
    </location>
</feature>
<feature type="region of interest" description="G4" evidence="1">
    <location>
        <begin position="581"/>
        <end position="584"/>
    </location>
</feature>
<feature type="region of interest" description="G5" evidence="1">
    <location>
        <begin position="617"/>
        <end position="619"/>
    </location>
</feature>
<feature type="compositionally biased region" description="Basic and acidic residues" evidence="3">
    <location>
        <begin position="83"/>
        <end position="120"/>
    </location>
</feature>
<feature type="compositionally biased region" description="Basic and acidic residues" evidence="3">
    <location>
        <begin position="128"/>
        <end position="148"/>
    </location>
</feature>
<feature type="compositionally biased region" description="Basic and acidic residues" evidence="3">
    <location>
        <begin position="157"/>
        <end position="172"/>
    </location>
</feature>
<feature type="compositionally biased region" description="Basic and acidic residues" evidence="3">
    <location>
        <begin position="186"/>
        <end position="202"/>
    </location>
</feature>
<feature type="compositionally biased region" description="Basic and acidic residues" evidence="3">
    <location>
        <begin position="210"/>
        <end position="246"/>
    </location>
</feature>
<feature type="compositionally biased region" description="Basic and acidic residues" evidence="3">
    <location>
        <begin position="272"/>
        <end position="288"/>
    </location>
</feature>
<feature type="compositionally biased region" description="Basic and acidic residues" evidence="3">
    <location>
        <begin position="314"/>
        <end position="333"/>
    </location>
</feature>
<feature type="compositionally biased region" description="Basic and acidic residues" evidence="3">
    <location>
        <begin position="343"/>
        <end position="360"/>
    </location>
</feature>
<feature type="compositionally biased region" description="Low complexity" evidence="3">
    <location>
        <begin position="374"/>
        <end position="386"/>
    </location>
</feature>
<feature type="binding site" evidence="2">
    <location>
        <begin position="481"/>
        <end position="488"/>
    </location>
    <ligand>
        <name>GTP</name>
        <dbReference type="ChEBI" id="CHEBI:37565"/>
    </ligand>
</feature>
<feature type="binding site" evidence="2">
    <location>
        <begin position="527"/>
        <end position="531"/>
    </location>
    <ligand>
        <name>GTP</name>
        <dbReference type="ChEBI" id="CHEBI:37565"/>
    </ligand>
</feature>
<feature type="binding site" evidence="2">
    <location>
        <begin position="581"/>
        <end position="584"/>
    </location>
    <ligand>
        <name>GTP</name>
        <dbReference type="ChEBI" id="CHEBI:37565"/>
    </ligand>
</feature>
<evidence type="ECO:0000250" key="1"/>
<evidence type="ECO:0000255" key="2">
    <source>
        <dbReference type="HAMAP-Rule" id="MF_00100"/>
    </source>
</evidence>
<evidence type="ECO:0000256" key="3">
    <source>
        <dbReference type="SAM" id="MobiDB-lite"/>
    </source>
</evidence>
<sequence length="973" mass="107814">MVKKRVHELAKELKIESKEIINRLNQMGINVKSHMSTLEDGVVERLHQLYRPDQEEVKPAAAKPPAAGQTIKPEEVAPQAQPESRKKDAAMLDSQKPDRDRVQKNGRERAGKATRADHYKGAGLVERVPSRPPDRRFQERPKQSDKARPWGQPRADQGARLKTADFVQERTRSARAGQDYSQPEKVQQERVQDRQQKERPPFEKAQQPRPQHEHKPQDSVKERPHPERASREADNAKRAERLDKGAGKTAEIAYKSGLKALEKAQVGTKPQRAGERGARPGGLHETKPKKNLAPGDAGYAKLWQEQTPVIPQKLLDDRRRQTEEKVKVTEKQKQQAKSQKLVKSREKRNAMAELAEERLRPRPAVAGSRKKGAAKPQEQAQKPAQPLEKKPIVLGESTTVQELALKMHKSPAELIKKLMQLGVMATINQEIDTDTATILAGEFGYEVEVKLPVDIEAMLMQEPEDDPVSLQDRPCVVTVMGHVDHGKTSLLDAIRETNVTATEAGGITQHIGAYQVEHNGKKITFLDTPGHEAFTAMRARGARVTDIAILVVAADDGVMPQTVEAINHAKEAKVPIIVAINKIDKPGANPDRVKQQLTEHGLVAEEWGGDTICVNVSALKKEGLKDLLEMILLVAEMSELKANPNRPARGTVIEAELDKGRGPVANVLVQNGTLNVGDTLIAGAAFGRVRAMMDDKGRRIKKAGPSTPVEVLGFSEVPQAGDIFVVVEDEKLARTIVARRQARKREEELKSTARVSLADLFKHIQEGQIKELGIIIKADVQGSVEALRQALERLSTDEVRVNIIHGGVGAITETDVMLASASNAIIIGFNVRPDVNARKAAENEKVDVRLYRVIYDAIEDVKAAMSGLLEPEYREVTLGRAEIRKIFRSSKIGNIAGCYVLEGKIERDASVRVIRDGIVVHEGKLESLKRFKDDVREVVQGYECGIALEKFNEIQEGDIIEAFTVEAIKRQLT</sequence>
<organism>
    <name type="scientific">Pelotomaculum thermopropionicum (strain DSM 13744 / JCM 10971 / SI)</name>
    <dbReference type="NCBI Taxonomy" id="370438"/>
    <lineage>
        <taxon>Bacteria</taxon>
        <taxon>Bacillati</taxon>
        <taxon>Bacillota</taxon>
        <taxon>Clostridia</taxon>
        <taxon>Eubacteriales</taxon>
        <taxon>Desulfotomaculaceae</taxon>
        <taxon>Pelotomaculum</taxon>
    </lineage>
</organism>
<accession>A5D2S0</accession>
<dbReference type="EMBL" id="AP009389">
    <property type="protein sequence ID" value="BAF59450.1"/>
    <property type="molecule type" value="Genomic_DNA"/>
</dbReference>
<dbReference type="SMR" id="A5D2S0"/>
<dbReference type="STRING" id="370438.PTH_1269"/>
<dbReference type="KEGG" id="pth:PTH_1269"/>
<dbReference type="eggNOG" id="COG0532">
    <property type="taxonomic scope" value="Bacteria"/>
</dbReference>
<dbReference type="eggNOG" id="COG3064">
    <property type="taxonomic scope" value="Bacteria"/>
</dbReference>
<dbReference type="HOGENOM" id="CLU_006301_5_1_9"/>
<dbReference type="Proteomes" id="UP000006556">
    <property type="component" value="Chromosome"/>
</dbReference>
<dbReference type="GO" id="GO:0005829">
    <property type="term" value="C:cytosol"/>
    <property type="evidence" value="ECO:0007669"/>
    <property type="project" value="TreeGrafter"/>
</dbReference>
<dbReference type="GO" id="GO:0005525">
    <property type="term" value="F:GTP binding"/>
    <property type="evidence" value="ECO:0007669"/>
    <property type="project" value="UniProtKB-KW"/>
</dbReference>
<dbReference type="GO" id="GO:0003924">
    <property type="term" value="F:GTPase activity"/>
    <property type="evidence" value="ECO:0007669"/>
    <property type="project" value="UniProtKB-UniRule"/>
</dbReference>
<dbReference type="GO" id="GO:0003743">
    <property type="term" value="F:translation initiation factor activity"/>
    <property type="evidence" value="ECO:0007669"/>
    <property type="project" value="UniProtKB-UniRule"/>
</dbReference>
<dbReference type="CDD" id="cd01887">
    <property type="entry name" value="IF2_eIF5B"/>
    <property type="match status" value="1"/>
</dbReference>
<dbReference type="CDD" id="cd03702">
    <property type="entry name" value="IF2_mtIF2_II"/>
    <property type="match status" value="1"/>
</dbReference>
<dbReference type="CDD" id="cd03692">
    <property type="entry name" value="mtIF2_IVc"/>
    <property type="match status" value="1"/>
</dbReference>
<dbReference type="FunFam" id="2.40.30.10:FF:000007">
    <property type="entry name" value="Translation initiation factor IF-2"/>
    <property type="match status" value="1"/>
</dbReference>
<dbReference type="FunFam" id="2.40.30.10:FF:000008">
    <property type="entry name" value="Translation initiation factor IF-2"/>
    <property type="match status" value="1"/>
</dbReference>
<dbReference type="FunFam" id="3.40.50.10050:FF:000001">
    <property type="entry name" value="Translation initiation factor IF-2"/>
    <property type="match status" value="1"/>
</dbReference>
<dbReference type="FunFam" id="3.40.50.300:FF:000019">
    <property type="entry name" value="Translation initiation factor IF-2"/>
    <property type="match status" value="1"/>
</dbReference>
<dbReference type="Gene3D" id="1.10.10.2480">
    <property type="match status" value="1"/>
</dbReference>
<dbReference type="Gene3D" id="3.40.50.300">
    <property type="entry name" value="P-loop containing nucleotide triphosphate hydrolases"/>
    <property type="match status" value="1"/>
</dbReference>
<dbReference type="Gene3D" id="2.40.30.10">
    <property type="entry name" value="Translation factors"/>
    <property type="match status" value="2"/>
</dbReference>
<dbReference type="Gene3D" id="3.40.50.10050">
    <property type="entry name" value="Translation initiation factor IF- 2, domain 3"/>
    <property type="match status" value="1"/>
</dbReference>
<dbReference type="HAMAP" id="MF_00100_B">
    <property type="entry name" value="IF_2_B"/>
    <property type="match status" value="1"/>
</dbReference>
<dbReference type="InterPro" id="IPR053905">
    <property type="entry name" value="EF-G-like_DII"/>
</dbReference>
<dbReference type="InterPro" id="IPR044145">
    <property type="entry name" value="IF2_II"/>
</dbReference>
<dbReference type="InterPro" id="IPR006847">
    <property type="entry name" value="IF2_N"/>
</dbReference>
<dbReference type="InterPro" id="IPR027417">
    <property type="entry name" value="P-loop_NTPase"/>
</dbReference>
<dbReference type="InterPro" id="IPR005225">
    <property type="entry name" value="Small_GTP-bd"/>
</dbReference>
<dbReference type="InterPro" id="IPR000795">
    <property type="entry name" value="T_Tr_GTP-bd_dom"/>
</dbReference>
<dbReference type="InterPro" id="IPR000178">
    <property type="entry name" value="TF_IF2_bacterial-like"/>
</dbReference>
<dbReference type="InterPro" id="IPR015760">
    <property type="entry name" value="TIF_IF2"/>
</dbReference>
<dbReference type="InterPro" id="IPR023115">
    <property type="entry name" value="TIF_IF2_dom3"/>
</dbReference>
<dbReference type="InterPro" id="IPR036925">
    <property type="entry name" value="TIF_IF2_dom3_sf"/>
</dbReference>
<dbReference type="InterPro" id="IPR009000">
    <property type="entry name" value="Transl_B-barrel_sf"/>
</dbReference>
<dbReference type="NCBIfam" id="TIGR00487">
    <property type="entry name" value="IF-2"/>
    <property type="match status" value="1"/>
</dbReference>
<dbReference type="NCBIfam" id="TIGR00231">
    <property type="entry name" value="small_GTP"/>
    <property type="match status" value="1"/>
</dbReference>
<dbReference type="PANTHER" id="PTHR43381:SF5">
    <property type="entry name" value="TR-TYPE G DOMAIN-CONTAINING PROTEIN"/>
    <property type="match status" value="1"/>
</dbReference>
<dbReference type="PANTHER" id="PTHR43381">
    <property type="entry name" value="TRANSLATION INITIATION FACTOR IF-2-RELATED"/>
    <property type="match status" value="1"/>
</dbReference>
<dbReference type="Pfam" id="PF22042">
    <property type="entry name" value="EF-G_D2"/>
    <property type="match status" value="1"/>
</dbReference>
<dbReference type="Pfam" id="PF00009">
    <property type="entry name" value="GTP_EFTU"/>
    <property type="match status" value="1"/>
</dbReference>
<dbReference type="Pfam" id="PF11987">
    <property type="entry name" value="IF-2"/>
    <property type="match status" value="1"/>
</dbReference>
<dbReference type="Pfam" id="PF04760">
    <property type="entry name" value="IF2_N"/>
    <property type="match status" value="2"/>
</dbReference>
<dbReference type="SUPFAM" id="SSF52156">
    <property type="entry name" value="Initiation factor IF2/eIF5b, domain 3"/>
    <property type="match status" value="1"/>
</dbReference>
<dbReference type="SUPFAM" id="SSF52540">
    <property type="entry name" value="P-loop containing nucleoside triphosphate hydrolases"/>
    <property type="match status" value="1"/>
</dbReference>
<dbReference type="SUPFAM" id="SSF50447">
    <property type="entry name" value="Translation proteins"/>
    <property type="match status" value="2"/>
</dbReference>
<dbReference type="PROSITE" id="PS51722">
    <property type="entry name" value="G_TR_2"/>
    <property type="match status" value="1"/>
</dbReference>
<dbReference type="PROSITE" id="PS01176">
    <property type="entry name" value="IF2"/>
    <property type="match status" value="1"/>
</dbReference>
<name>IF2_PELTS</name>
<comment type="function">
    <text evidence="2">One of the essential components for the initiation of protein synthesis. Protects formylmethionyl-tRNA from spontaneous hydrolysis and promotes its binding to the 30S ribosomal subunits. Also involved in the hydrolysis of GTP during the formation of the 70S ribosomal complex.</text>
</comment>
<comment type="subcellular location">
    <subcellularLocation>
        <location evidence="2">Cytoplasm</location>
    </subcellularLocation>
</comment>
<comment type="similarity">
    <text evidence="2">Belongs to the TRAFAC class translation factor GTPase superfamily. Classic translation factor GTPase family. IF-2 subfamily.</text>
</comment>